<name>RSMH_SULNB</name>
<organism>
    <name type="scientific">Sulfurovum sp. (strain NBC37-1)</name>
    <dbReference type="NCBI Taxonomy" id="387093"/>
    <lineage>
        <taxon>Bacteria</taxon>
        <taxon>Pseudomonadati</taxon>
        <taxon>Campylobacterota</taxon>
        <taxon>Epsilonproteobacteria</taxon>
        <taxon>Campylobacterales</taxon>
        <taxon>Sulfurovaceae</taxon>
        <taxon>Sulfurovum</taxon>
    </lineage>
</organism>
<proteinExistence type="inferred from homology"/>
<reference key="1">
    <citation type="journal article" date="2007" name="Proc. Natl. Acad. Sci. U.S.A.">
        <title>Deep-sea vent epsilon-proteobacterial genomes provide insights into emergence of pathogens.</title>
        <authorList>
            <person name="Nakagawa S."/>
            <person name="Takaki Y."/>
            <person name="Shimamura S."/>
            <person name="Reysenbach A.-L."/>
            <person name="Takai K."/>
            <person name="Horikoshi K."/>
        </authorList>
    </citation>
    <scope>NUCLEOTIDE SEQUENCE [LARGE SCALE GENOMIC DNA]</scope>
    <source>
        <strain>NBC37-1</strain>
    </source>
</reference>
<protein>
    <recommendedName>
        <fullName evidence="1">Ribosomal RNA small subunit methyltransferase H</fullName>
        <ecNumber evidence="1">2.1.1.199</ecNumber>
    </recommendedName>
    <alternativeName>
        <fullName evidence="1">16S rRNA m(4)C1402 methyltransferase</fullName>
    </alternativeName>
    <alternativeName>
        <fullName evidence="1">rRNA (cytosine-N(4)-)-methyltransferase RsmH</fullName>
    </alternativeName>
</protein>
<accession>A6Q7Y2</accession>
<sequence length="307" mass="34492">METPHIPVLLEEVLESFSRVPEGYFVDCTLGYAGHSSEILKRYDHLKHIGIDRDDEALAFSKKRLEPFRDRSTLYKGTFATVLPTLKEAPVTALLADFGVSSLQLDKKERGFAFDSETLDMRMDANAPLSAYEVVNTYPKEKLEYIFDTYGEVRSYKKLASAVVDARAKAPIESAKALSEIAKGVIPPGGKIHPATLMFQAIRIEVNNELGEIEGLLDAIEAKHYEGEVVSLITFHSLEDRLVKNRFRKWSQECICDPHAIRCTCGKKHALGKALSRKPVTASKEELRVNPRSRSAKLRSFRFKSDS</sequence>
<gene>
    <name evidence="1" type="primary">rsmH</name>
    <name type="synonym">mraW</name>
    <name type="ordered locus">SUN_0632</name>
</gene>
<dbReference type="EC" id="2.1.1.199" evidence="1"/>
<dbReference type="EMBL" id="AP009179">
    <property type="protein sequence ID" value="BAF71591.1"/>
    <property type="molecule type" value="Genomic_DNA"/>
</dbReference>
<dbReference type="RefSeq" id="WP_011980324.1">
    <property type="nucleotide sequence ID" value="NC_009663.1"/>
</dbReference>
<dbReference type="SMR" id="A6Q7Y2"/>
<dbReference type="STRING" id="387093.SUN_0632"/>
<dbReference type="KEGG" id="sun:SUN_0632"/>
<dbReference type="eggNOG" id="COG0275">
    <property type="taxonomic scope" value="Bacteria"/>
</dbReference>
<dbReference type="HOGENOM" id="CLU_038422_3_0_7"/>
<dbReference type="OrthoDB" id="9806637at2"/>
<dbReference type="Proteomes" id="UP000006378">
    <property type="component" value="Chromosome"/>
</dbReference>
<dbReference type="GO" id="GO:0005737">
    <property type="term" value="C:cytoplasm"/>
    <property type="evidence" value="ECO:0007669"/>
    <property type="project" value="UniProtKB-SubCell"/>
</dbReference>
<dbReference type="GO" id="GO:0071424">
    <property type="term" value="F:rRNA (cytosine-N4-)-methyltransferase activity"/>
    <property type="evidence" value="ECO:0007669"/>
    <property type="project" value="UniProtKB-UniRule"/>
</dbReference>
<dbReference type="GO" id="GO:0070475">
    <property type="term" value="P:rRNA base methylation"/>
    <property type="evidence" value="ECO:0007669"/>
    <property type="project" value="UniProtKB-UniRule"/>
</dbReference>
<dbReference type="Gene3D" id="1.10.150.170">
    <property type="entry name" value="Putative methyltransferase TM0872, insert domain"/>
    <property type="match status" value="1"/>
</dbReference>
<dbReference type="Gene3D" id="3.40.50.150">
    <property type="entry name" value="Vaccinia Virus protein VP39"/>
    <property type="match status" value="1"/>
</dbReference>
<dbReference type="HAMAP" id="MF_01007">
    <property type="entry name" value="16SrRNA_methyltr_H"/>
    <property type="match status" value="1"/>
</dbReference>
<dbReference type="InterPro" id="IPR002903">
    <property type="entry name" value="RsmH"/>
</dbReference>
<dbReference type="InterPro" id="IPR023397">
    <property type="entry name" value="SAM-dep_MeTrfase_MraW_recog"/>
</dbReference>
<dbReference type="InterPro" id="IPR029063">
    <property type="entry name" value="SAM-dependent_MTases_sf"/>
</dbReference>
<dbReference type="NCBIfam" id="TIGR00006">
    <property type="entry name" value="16S rRNA (cytosine(1402)-N(4))-methyltransferase RsmH"/>
    <property type="match status" value="1"/>
</dbReference>
<dbReference type="PANTHER" id="PTHR11265:SF0">
    <property type="entry name" value="12S RRNA N4-METHYLCYTIDINE METHYLTRANSFERASE"/>
    <property type="match status" value="1"/>
</dbReference>
<dbReference type="PANTHER" id="PTHR11265">
    <property type="entry name" value="S-ADENOSYL-METHYLTRANSFERASE MRAW"/>
    <property type="match status" value="1"/>
</dbReference>
<dbReference type="Pfam" id="PF01795">
    <property type="entry name" value="Methyltransf_5"/>
    <property type="match status" value="1"/>
</dbReference>
<dbReference type="PIRSF" id="PIRSF004486">
    <property type="entry name" value="MraW"/>
    <property type="match status" value="1"/>
</dbReference>
<dbReference type="SUPFAM" id="SSF81799">
    <property type="entry name" value="Putative methyltransferase TM0872, insert domain"/>
    <property type="match status" value="1"/>
</dbReference>
<dbReference type="SUPFAM" id="SSF53335">
    <property type="entry name" value="S-adenosyl-L-methionine-dependent methyltransferases"/>
    <property type="match status" value="1"/>
</dbReference>
<comment type="function">
    <text evidence="1">Specifically methylates the N4 position of cytidine in position 1402 (C1402) of 16S rRNA.</text>
</comment>
<comment type="catalytic activity">
    <reaction evidence="1">
        <text>cytidine(1402) in 16S rRNA + S-adenosyl-L-methionine = N(4)-methylcytidine(1402) in 16S rRNA + S-adenosyl-L-homocysteine + H(+)</text>
        <dbReference type="Rhea" id="RHEA:42928"/>
        <dbReference type="Rhea" id="RHEA-COMP:10286"/>
        <dbReference type="Rhea" id="RHEA-COMP:10287"/>
        <dbReference type="ChEBI" id="CHEBI:15378"/>
        <dbReference type="ChEBI" id="CHEBI:57856"/>
        <dbReference type="ChEBI" id="CHEBI:59789"/>
        <dbReference type="ChEBI" id="CHEBI:74506"/>
        <dbReference type="ChEBI" id="CHEBI:82748"/>
        <dbReference type="EC" id="2.1.1.199"/>
    </reaction>
</comment>
<comment type="subcellular location">
    <subcellularLocation>
        <location evidence="1">Cytoplasm</location>
    </subcellularLocation>
</comment>
<comment type="similarity">
    <text evidence="1">Belongs to the methyltransferase superfamily. RsmH family.</text>
</comment>
<evidence type="ECO:0000255" key="1">
    <source>
        <dbReference type="HAMAP-Rule" id="MF_01007"/>
    </source>
</evidence>
<keyword id="KW-0963">Cytoplasm</keyword>
<keyword id="KW-0489">Methyltransferase</keyword>
<keyword id="KW-0698">rRNA processing</keyword>
<keyword id="KW-0949">S-adenosyl-L-methionine</keyword>
<keyword id="KW-0808">Transferase</keyword>
<feature type="chain" id="PRO_0000387176" description="Ribosomal RNA small subunit methyltransferase H">
    <location>
        <begin position="1"/>
        <end position="307"/>
    </location>
</feature>
<feature type="binding site" evidence="1">
    <location>
        <begin position="33"/>
        <end position="35"/>
    </location>
    <ligand>
        <name>S-adenosyl-L-methionine</name>
        <dbReference type="ChEBI" id="CHEBI:59789"/>
    </ligand>
</feature>
<feature type="binding site" evidence="1">
    <location>
        <position position="52"/>
    </location>
    <ligand>
        <name>S-adenosyl-L-methionine</name>
        <dbReference type="ChEBI" id="CHEBI:59789"/>
    </ligand>
</feature>
<feature type="binding site" evidence="1">
    <location>
        <position position="83"/>
    </location>
    <ligand>
        <name>S-adenosyl-L-methionine</name>
        <dbReference type="ChEBI" id="CHEBI:59789"/>
    </ligand>
</feature>
<feature type="binding site" evidence="1">
    <location>
        <position position="97"/>
    </location>
    <ligand>
        <name>S-adenosyl-L-methionine</name>
        <dbReference type="ChEBI" id="CHEBI:59789"/>
    </ligand>
</feature>
<feature type="binding site" evidence="1">
    <location>
        <position position="104"/>
    </location>
    <ligand>
        <name>S-adenosyl-L-methionine</name>
        <dbReference type="ChEBI" id="CHEBI:59789"/>
    </ligand>
</feature>